<feature type="chain" id="PRO_0000176939" description="Transcription elongation factor GreA">
    <location>
        <begin position="1"/>
        <end position="161"/>
    </location>
</feature>
<feature type="coiled-coil region" evidence="1">
    <location>
        <begin position="8"/>
        <end position="28"/>
    </location>
</feature>
<accession>P47524</accession>
<comment type="function">
    <text evidence="1">Necessary for efficient RNA polymerase transcription elongation past template-encoded arresting sites. The arresting sites in DNA have the property of trapping a certain fraction of elongating RNA polymerases that pass through, resulting in locked ternary complexes. Cleavage of the nascent transcript by cleavage factors such as GreA or GreB allows the resumption of elongation from the new 3'terminus. GreA releases sequences of 2 to 3 nucleotides.</text>
</comment>
<comment type="similarity">
    <text evidence="1">Belongs to the GreA/GreB family.</text>
</comment>
<sequence>MELNKNYLTQEGFKQLEKELENLIQVKRPEIIRLLQEARDQGDLSENADYDAAKAQQGEIETRIAEIQDILANAKLISDHQAKTKVTKVSLGSTVEIYDYSSKSNEKYTIVGTLEANPEEHKISNESPLALAIYGRLIGDECDVVGIEVPYRVKILKISNR</sequence>
<name>GREA_MYCGE</name>
<keyword id="KW-0175">Coiled coil</keyword>
<keyword id="KW-0238">DNA-binding</keyword>
<keyword id="KW-1185">Reference proteome</keyword>
<keyword id="KW-0804">Transcription</keyword>
<keyword id="KW-0805">Transcription regulation</keyword>
<evidence type="ECO:0000255" key="1">
    <source>
        <dbReference type="HAMAP-Rule" id="MF_00105"/>
    </source>
</evidence>
<organism>
    <name type="scientific">Mycoplasma genitalium (strain ATCC 33530 / DSM 19775 / NCTC 10195 / G37)</name>
    <name type="common">Mycoplasmoides genitalium</name>
    <dbReference type="NCBI Taxonomy" id="243273"/>
    <lineage>
        <taxon>Bacteria</taxon>
        <taxon>Bacillati</taxon>
        <taxon>Mycoplasmatota</taxon>
        <taxon>Mycoplasmoidales</taxon>
        <taxon>Mycoplasmoidaceae</taxon>
        <taxon>Mycoplasmoides</taxon>
    </lineage>
</organism>
<dbReference type="EMBL" id="L43967">
    <property type="protein sequence ID" value="AAC71504.1"/>
    <property type="molecule type" value="Genomic_DNA"/>
</dbReference>
<dbReference type="PIR" id="B64231">
    <property type="entry name" value="B64231"/>
</dbReference>
<dbReference type="RefSeq" id="WP_009885993.1">
    <property type="nucleotide sequence ID" value="NC_000908.2"/>
</dbReference>
<dbReference type="SMR" id="P47524"/>
<dbReference type="FunCoup" id="P47524">
    <property type="interactions" value="113"/>
</dbReference>
<dbReference type="STRING" id="243273.MG_282"/>
<dbReference type="GeneID" id="88282443"/>
<dbReference type="KEGG" id="mge:MG_282"/>
<dbReference type="eggNOG" id="COG0782">
    <property type="taxonomic scope" value="Bacteria"/>
</dbReference>
<dbReference type="HOGENOM" id="CLU_101379_2_1_14"/>
<dbReference type="InParanoid" id="P47524"/>
<dbReference type="OrthoDB" id="9808774at2"/>
<dbReference type="BioCyc" id="MGEN243273:G1GJ2-345-MONOMER"/>
<dbReference type="Proteomes" id="UP000000807">
    <property type="component" value="Chromosome"/>
</dbReference>
<dbReference type="GO" id="GO:0003677">
    <property type="term" value="F:DNA binding"/>
    <property type="evidence" value="ECO:0007669"/>
    <property type="project" value="UniProtKB-UniRule"/>
</dbReference>
<dbReference type="GO" id="GO:0070063">
    <property type="term" value="F:RNA polymerase binding"/>
    <property type="evidence" value="ECO:0007669"/>
    <property type="project" value="InterPro"/>
</dbReference>
<dbReference type="GO" id="GO:0006354">
    <property type="term" value="P:DNA-templated transcription elongation"/>
    <property type="evidence" value="ECO:0000318"/>
    <property type="project" value="GO_Central"/>
</dbReference>
<dbReference type="GO" id="GO:0032784">
    <property type="term" value="P:regulation of DNA-templated transcription elongation"/>
    <property type="evidence" value="ECO:0007669"/>
    <property type="project" value="UniProtKB-UniRule"/>
</dbReference>
<dbReference type="FunFam" id="1.10.287.180:FF:000001">
    <property type="entry name" value="Transcription elongation factor GreA"/>
    <property type="match status" value="1"/>
</dbReference>
<dbReference type="FunFam" id="3.10.50.30:FF:000004">
    <property type="entry name" value="Transcription elongation factor GreA"/>
    <property type="match status" value="1"/>
</dbReference>
<dbReference type="Gene3D" id="3.10.50.30">
    <property type="entry name" value="Transcription elongation factor, GreA/GreB, C-terminal domain"/>
    <property type="match status" value="1"/>
</dbReference>
<dbReference type="Gene3D" id="1.10.287.180">
    <property type="entry name" value="Transcription elongation factor, GreA/GreB, N-terminal domain"/>
    <property type="match status" value="1"/>
</dbReference>
<dbReference type="HAMAP" id="MF_00105">
    <property type="entry name" value="GreA_GreB"/>
    <property type="match status" value="1"/>
</dbReference>
<dbReference type="InterPro" id="IPR036953">
    <property type="entry name" value="GreA/GreB_C_sf"/>
</dbReference>
<dbReference type="InterPro" id="IPR018151">
    <property type="entry name" value="TF_GreA/GreB_CS"/>
</dbReference>
<dbReference type="InterPro" id="IPR006359">
    <property type="entry name" value="Tscrpt_elong_fac_GreA"/>
</dbReference>
<dbReference type="InterPro" id="IPR028624">
    <property type="entry name" value="Tscrpt_elong_fac_GreA/B"/>
</dbReference>
<dbReference type="InterPro" id="IPR001437">
    <property type="entry name" value="Tscrpt_elong_fac_GreA/B_C"/>
</dbReference>
<dbReference type="InterPro" id="IPR023459">
    <property type="entry name" value="Tscrpt_elong_fac_GreA/B_fam"/>
</dbReference>
<dbReference type="InterPro" id="IPR022691">
    <property type="entry name" value="Tscrpt_elong_fac_GreA/B_N"/>
</dbReference>
<dbReference type="InterPro" id="IPR036805">
    <property type="entry name" value="Tscrpt_elong_fac_GreA/B_N_sf"/>
</dbReference>
<dbReference type="NCBIfam" id="TIGR01462">
    <property type="entry name" value="greA"/>
    <property type="match status" value="1"/>
</dbReference>
<dbReference type="NCBIfam" id="NF001263">
    <property type="entry name" value="PRK00226.1-4"/>
    <property type="match status" value="1"/>
</dbReference>
<dbReference type="PANTHER" id="PTHR30437">
    <property type="entry name" value="TRANSCRIPTION ELONGATION FACTOR GREA"/>
    <property type="match status" value="1"/>
</dbReference>
<dbReference type="PANTHER" id="PTHR30437:SF4">
    <property type="entry name" value="TRANSCRIPTION ELONGATION FACTOR GREA"/>
    <property type="match status" value="1"/>
</dbReference>
<dbReference type="Pfam" id="PF01272">
    <property type="entry name" value="GreA_GreB"/>
    <property type="match status" value="1"/>
</dbReference>
<dbReference type="Pfam" id="PF03449">
    <property type="entry name" value="GreA_GreB_N"/>
    <property type="match status" value="1"/>
</dbReference>
<dbReference type="PIRSF" id="PIRSF006092">
    <property type="entry name" value="GreA_GreB"/>
    <property type="match status" value="1"/>
</dbReference>
<dbReference type="SUPFAM" id="SSF54534">
    <property type="entry name" value="FKBP-like"/>
    <property type="match status" value="1"/>
</dbReference>
<dbReference type="SUPFAM" id="SSF46557">
    <property type="entry name" value="GreA transcript cleavage protein, N-terminal domain"/>
    <property type="match status" value="1"/>
</dbReference>
<dbReference type="PROSITE" id="PS00829">
    <property type="entry name" value="GREAB_1"/>
    <property type="match status" value="1"/>
</dbReference>
<dbReference type="PROSITE" id="PS00830">
    <property type="entry name" value="GREAB_2"/>
    <property type="match status" value="1"/>
</dbReference>
<proteinExistence type="inferred from homology"/>
<protein>
    <recommendedName>
        <fullName evidence="1">Transcription elongation factor GreA</fullName>
    </recommendedName>
    <alternativeName>
        <fullName evidence="1">Transcript cleavage factor GreA</fullName>
    </alternativeName>
</protein>
<gene>
    <name evidence="1" type="primary">greA</name>
    <name type="ordered locus">MG282</name>
</gene>
<reference key="1">
    <citation type="journal article" date="1995" name="Science">
        <title>The minimal gene complement of Mycoplasma genitalium.</title>
        <authorList>
            <person name="Fraser C.M."/>
            <person name="Gocayne J.D."/>
            <person name="White O."/>
            <person name="Adams M.D."/>
            <person name="Clayton R.A."/>
            <person name="Fleischmann R.D."/>
            <person name="Bult C.J."/>
            <person name="Kerlavage A.R."/>
            <person name="Sutton G.G."/>
            <person name="Kelley J.M."/>
            <person name="Fritchman J.L."/>
            <person name="Weidman J.F."/>
            <person name="Small K.V."/>
            <person name="Sandusky M."/>
            <person name="Fuhrmann J.L."/>
            <person name="Nguyen D.T."/>
            <person name="Utterback T.R."/>
            <person name="Saudek D.M."/>
            <person name="Phillips C.A."/>
            <person name="Merrick J.M."/>
            <person name="Tomb J.-F."/>
            <person name="Dougherty B.A."/>
            <person name="Bott K.F."/>
            <person name="Hu P.-C."/>
            <person name="Lucier T.S."/>
            <person name="Peterson S.N."/>
            <person name="Smith H.O."/>
            <person name="Hutchison C.A. III"/>
            <person name="Venter J.C."/>
        </authorList>
    </citation>
    <scope>NUCLEOTIDE SEQUENCE [LARGE SCALE GENOMIC DNA]</scope>
    <source>
        <strain>ATCC 33530 / DSM 19775 / NCTC 10195 / G37</strain>
    </source>
</reference>